<accession>B5RG84</accession>
<feature type="chain" id="PRO_1000098972" description="4-hydroxy-3-methylbut-2-enyl diphosphate reductase">
    <location>
        <begin position="1"/>
        <end position="316"/>
    </location>
</feature>
<feature type="active site" description="Proton donor" evidence="1">
    <location>
        <position position="126"/>
    </location>
</feature>
<feature type="binding site" evidence="1">
    <location>
        <position position="12"/>
    </location>
    <ligand>
        <name>[4Fe-4S] cluster</name>
        <dbReference type="ChEBI" id="CHEBI:49883"/>
    </ligand>
</feature>
<feature type="binding site" evidence="1">
    <location>
        <position position="41"/>
    </location>
    <ligand>
        <name>(2E)-4-hydroxy-3-methylbut-2-enyl diphosphate</name>
        <dbReference type="ChEBI" id="CHEBI:128753"/>
    </ligand>
</feature>
<feature type="binding site" evidence="1">
    <location>
        <position position="41"/>
    </location>
    <ligand>
        <name>dimethylallyl diphosphate</name>
        <dbReference type="ChEBI" id="CHEBI:57623"/>
    </ligand>
</feature>
<feature type="binding site" evidence="1">
    <location>
        <position position="41"/>
    </location>
    <ligand>
        <name>isopentenyl diphosphate</name>
        <dbReference type="ChEBI" id="CHEBI:128769"/>
    </ligand>
</feature>
<feature type="binding site" evidence="1">
    <location>
        <position position="74"/>
    </location>
    <ligand>
        <name>(2E)-4-hydroxy-3-methylbut-2-enyl diphosphate</name>
        <dbReference type="ChEBI" id="CHEBI:128753"/>
    </ligand>
</feature>
<feature type="binding site" evidence="1">
    <location>
        <position position="74"/>
    </location>
    <ligand>
        <name>dimethylallyl diphosphate</name>
        <dbReference type="ChEBI" id="CHEBI:57623"/>
    </ligand>
</feature>
<feature type="binding site" evidence="1">
    <location>
        <position position="74"/>
    </location>
    <ligand>
        <name>isopentenyl diphosphate</name>
        <dbReference type="ChEBI" id="CHEBI:128769"/>
    </ligand>
</feature>
<feature type="binding site" evidence="1">
    <location>
        <position position="96"/>
    </location>
    <ligand>
        <name>[4Fe-4S] cluster</name>
        <dbReference type="ChEBI" id="CHEBI:49883"/>
    </ligand>
</feature>
<feature type="binding site" evidence="1">
    <location>
        <position position="124"/>
    </location>
    <ligand>
        <name>(2E)-4-hydroxy-3-methylbut-2-enyl diphosphate</name>
        <dbReference type="ChEBI" id="CHEBI:128753"/>
    </ligand>
</feature>
<feature type="binding site" evidence="1">
    <location>
        <position position="124"/>
    </location>
    <ligand>
        <name>dimethylallyl diphosphate</name>
        <dbReference type="ChEBI" id="CHEBI:57623"/>
    </ligand>
</feature>
<feature type="binding site" evidence="1">
    <location>
        <position position="124"/>
    </location>
    <ligand>
        <name>isopentenyl diphosphate</name>
        <dbReference type="ChEBI" id="CHEBI:128769"/>
    </ligand>
</feature>
<feature type="binding site" evidence="1">
    <location>
        <position position="167"/>
    </location>
    <ligand>
        <name>(2E)-4-hydroxy-3-methylbut-2-enyl diphosphate</name>
        <dbReference type="ChEBI" id="CHEBI:128753"/>
    </ligand>
</feature>
<feature type="binding site" evidence="1">
    <location>
        <position position="197"/>
    </location>
    <ligand>
        <name>[4Fe-4S] cluster</name>
        <dbReference type="ChEBI" id="CHEBI:49883"/>
    </ligand>
</feature>
<feature type="binding site" evidence="1">
    <location>
        <position position="225"/>
    </location>
    <ligand>
        <name>(2E)-4-hydroxy-3-methylbut-2-enyl diphosphate</name>
        <dbReference type="ChEBI" id="CHEBI:128753"/>
    </ligand>
</feature>
<feature type="binding site" evidence="1">
    <location>
        <position position="225"/>
    </location>
    <ligand>
        <name>dimethylallyl diphosphate</name>
        <dbReference type="ChEBI" id="CHEBI:57623"/>
    </ligand>
</feature>
<feature type="binding site" evidence="1">
    <location>
        <position position="225"/>
    </location>
    <ligand>
        <name>isopentenyl diphosphate</name>
        <dbReference type="ChEBI" id="CHEBI:128769"/>
    </ligand>
</feature>
<feature type="binding site" evidence="1">
    <location>
        <position position="226"/>
    </location>
    <ligand>
        <name>(2E)-4-hydroxy-3-methylbut-2-enyl diphosphate</name>
        <dbReference type="ChEBI" id="CHEBI:128753"/>
    </ligand>
</feature>
<feature type="binding site" evidence="1">
    <location>
        <position position="226"/>
    </location>
    <ligand>
        <name>dimethylallyl diphosphate</name>
        <dbReference type="ChEBI" id="CHEBI:57623"/>
    </ligand>
</feature>
<feature type="binding site" evidence="1">
    <location>
        <position position="226"/>
    </location>
    <ligand>
        <name>isopentenyl diphosphate</name>
        <dbReference type="ChEBI" id="CHEBI:128769"/>
    </ligand>
</feature>
<feature type="binding site" evidence="1">
    <location>
        <position position="227"/>
    </location>
    <ligand>
        <name>(2E)-4-hydroxy-3-methylbut-2-enyl diphosphate</name>
        <dbReference type="ChEBI" id="CHEBI:128753"/>
    </ligand>
</feature>
<feature type="binding site" evidence="1">
    <location>
        <position position="227"/>
    </location>
    <ligand>
        <name>dimethylallyl diphosphate</name>
        <dbReference type="ChEBI" id="CHEBI:57623"/>
    </ligand>
</feature>
<feature type="binding site" evidence="1">
    <location>
        <position position="227"/>
    </location>
    <ligand>
        <name>isopentenyl diphosphate</name>
        <dbReference type="ChEBI" id="CHEBI:128769"/>
    </ligand>
</feature>
<feature type="binding site" evidence="1">
    <location>
        <position position="269"/>
    </location>
    <ligand>
        <name>(2E)-4-hydroxy-3-methylbut-2-enyl diphosphate</name>
        <dbReference type="ChEBI" id="CHEBI:128753"/>
    </ligand>
</feature>
<feature type="binding site" evidence="1">
    <location>
        <position position="269"/>
    </location>
    <ligand>
        <name>dimethylallyl diphosphate</name>
        <dbReference type="ChEBI" id="CHEBI:57623"/>
    </ligand>
</feature>
<feature type="binding site" evidence="1">
    <location>
        <position position="269"/>
    </location>
    <ligand>
        <name>isopentenyl diphosphate</name>
        <dbReference type="ChEBI" id="CHEBI:128769"/>
    </ligand>
</feature>
<dbReference type="EC" id="1.17.7.4" evidence="1"/>
<dbReference type="EMBL" id="AM933173">
    <property type="protein sequence ID" value="CAR35960.1"/>
    <property type="molecule type" value="Genomic_DNA"/>
</dbReference>
<dbReference type="RefSeq" id="WP_001166428.1">
    <property type="nucleotide sequence ID" value="NC_011274.1"/>
</dbReference>
<dbReference type="SMR" id="B5RG84"/>
<dbReference type="KEGG" id="seg:SG0052"/>
<dbReference type="HOGENOM" id="CLU_027486_1_0_6"/>
<dbReference type="UniPathway" id="UPA00056">
    <property type="reaction ID" value="UER00097"/>
</dbReference>
<dbReference type="UniPathway" id="UPA00059">
    <property type="reaction ID" value="UER00105"/>
</dbReference>
<dbReference type="Proteomes" id="UP000008321">
    <property type="component" value="Chromosome"/>
</dbReference>
<dbReference type="GO" id="GO:0051539">
    <property type="term" value="F:4 iron, 4 sulfur cluster binding"/>
    <property type="evidence" value="ECO:0007669"/>
    <property type="project" value="UniProtKB-UniRule"/>
</dbReference>
<dbReference type="GO" id="GO:0051745">
    <property type="term" value="F:4-hydroxy-3-methylbut-2-enyl diphosphate reductase activity"/>
    <property type="evidence" value="ECO:0007669"/>
    <property type="project" value="UniProtKB-UniRule"/>
</dbReference>
<dbReference type="GO" id="GO:0046872">
    <property type="term" value="F:metal ion binding"/>
    <property type="evidence" value="ECO:0007669"/>
    <property type="project" value="UniProtKB-KW"/>
</dbReference>
<dbReference type="GO" id="GO:0050992">
    <property type="term" value="P:dimethylallyl diphosphate biosynthetic process"/>
    <property type="evidence" value="ECO:0007669"/>
    <property type="project" value="UniProtKB-UniRule"/>
</dbReference>
<dbReference type="GO" id="GO:0019288">
    <property type="term" value="P:isopentenyl diphosphate biosynthetic process, methylerythritol 4-phosphate pathway"/>
    <property type="evidence" value="ECO:0007669"/>
    <property type="project" value="UniProtKB-UniRule"/>
</dbReference>
<dbReference type="GO" id="GO:0016114">
    <property type="term" value="P:terpenoid biosynthetic process"/>
    <property type="evidence" value="ECO:0007669"/>
    <property type="project" value="UniProtKB-UniRule"/>
</dbReference>
<dbReference type="CDD" id="cd13944">
    <property type="entry name" value="lytB_ispH"/>
    <property type="match status" value="1"/>
</dbReference>
<dbReference type="FunFam" id="3.40.1010.20:FF:000001">
    <property type="entry name" value="4-hydroxy-3-methylbut-2-enyl diphosphate reductase"/>
    <property type="match status" value="1"/>
</dbReference>
<dbReference type="FunFam" id="3.40.50.11270:FF:000001">
    <property type="entry name" value="4-hydroxy-3-methylbut-2-enyl diphosphate reductase"/>
    <property type="match status" value="1"/>
</dbReference>
<dbReference type="Gene3D" id="3.40.50.11270">
    <property type="match status" value="1"/>
</dbReference>
<dbReference type="Gene3D" id="3.40.1010.20">
    <property type="entry name" value="4-hydroxy-3-methylbut-2-enyl diphosphate reductase, catalytic domain"/>
    <property type="match status" value="2"/>
</dbReference>
<dbReference type="HAMAP" id="MF_00191">
    <property type="entry name" value="IspH"/>
    <property type="match status" value="1"/>
</dbReference>
<dbReference type="InterPro" id="IPR003451">
    <property type="entry name" value="LytB/IspH"/>
</dbReference>
<dbReference type="NCBIfam" id="TIGR00216">
    <property type="entry name" value="ispH_lytB"/>
    <property type="match status" value="1"/>
</dbReference>
<dbReference type="NCBIfam" id="NF002188">
    <property type="entry name" value="PRK01045.1-2"/>
    <property type="match status" value="1"/>
</dbReference>
<dbReference type="NCBIfam" id="NF002190">
    <property type="entry name" value="PRK01045.1-4"/>
    <property type="match status" value="1"/>
</dbReference>
<dbReference type="PANTHER" id="PTHR30426">
    <property type="entry name" value="4-HYDROXY-3-METHYLBUT-2-ENYL DIPHOSPHATE REDUCTASE"/>
    <property type="match status" value="1"/>
</dbReference>
<dbReference type="PANTHER" id="PTHR30426:SF0">
    <property type="entry name" value="4-HYDROXY-3-METHYLBUT-2-ENYL DIPHOSPHATE REDUCTASE"/>
    <property type="match status" value="1"/>
</dbReference>
<dbReference type="Pfam" id="PF02401">
    <property type="entry name" value="LYTB"/>
    <property type="match status" value="1"/>
</dbReference>
<evidence type="ECO:0000255" key="1">
    <source>
        <dbReference type="HAMAP-Rule" id="MF_00191"/>
    </source>
</evidence>
<name>ISPH_SALG2</name>
<sequence>MQILLANPRGFCAGVDRAISIVENALAIYGAPIYVRHEVVHNRYVVDSLRQRGAIFIEQISEVPDGAILIFSAHGVSQAVRNEAKSRDLTVFDATCPLVTKVHMEVARASRRGEESILIGHAGHPEVEGTMGQYSNPEGGMYLVESPEDVWTLNVKNEGKLSFMTQTTLSVDDTSDVIDALRKRFPKIVGPRKDDICYATTNRQEAVRALAEQADVVLVVGSKNSSNSNRLAELAQRMGRTAFLIDDAADIQEAWVKEAACVGVTAGASAPDILVQNVIARLREFGGGEAVTLEGREENIVFEVPKELRVDVREVE</sequence>
<comment type="function">
    <text evidence="1">Catalyzes the conversion of 1-hydroxy-2-methyl-2-(E)-butenyl 4-diphosphate (HMBPP) into a mixture of isopentenyl diphosphate (IPP) and dimethylallyl diphosphate (DMAPP). Acts in the terminal step of the DOXP/MEP pathway for isoprenoid precursor biosynthesis.</text>
</comment>
<comment type="catalytic activity">
    <reaction evidence="1">
        <text>isopentenyl diphosphate + 2 oxidized [2Fe-2S]-[ferredoxin] + H2O = (2E)-4-hydroxy-3-methylbut-2-enyl diphosphate + 2 reduced [2Fe-2S]-[ferredoxin] + 2 H(+)</text>
        <dbReference type="Rhea" id="RHEA:24488"/>
        <dbReference type="Rhea" id="RHEA-COMP:10000"/>
        <dbReference type="Rhea" id="RHEA-COMP:10001"/>
        <dbReference type="ChEBI" id="CHEBI:15377"/>
        <dbReference type="ChEBI" id="CHEBI:15378"/>
        <dbReference type="ChEBI" id="CHEBI:33737"/>
        <dbReference type="ChEBI" id="CHEBI:33738"/>
        <dbReference type="ChEBI" id="CHEBI:128753"/>
        <dbReference type="ChEBI" id="CHEBI:128769"/>
        <dbReference type="EC" id="1.17.7.4"/>
    </reaction>
</comment>
<comment type="catalytic activity">
    <reaction evidence="1">
        <text>dimethylallyl diphosphate + 2 oxidized [2Fe-2S]-[ferredoxin] + H2O = (2E)-4-hydroxy-3-methylbut-2-enyl diphosphate + 2 reduced [2Fe-2S]-[ferredoxin] + 2 H(+)</text>
        <dbReference type="Rhea" id="RHEA:24825"/>
        <dbReference type="Rhea" id="RHEA-COMP:10000"/>
        <dbReference type="Rhea" id="RHEA-COMP:10001"/>
        <dbReference type="ChEBI" id="CHEBI:15377"/>
        <dbReference type="ChEBI" id="CHEBI:15378"/>
        <dbReference type="ChEBI" id="CHEBI:33737"/>
        <dbReference type="ChEBI" id="CHEBI:33738"/>
        <dbReference type="ChEBI" id="CHEBI:57623"/>
        <dbReference type="ChEBI" id="CHEBI:128753"/>
        <dbReference type="EC" id="1.17.7.4"/>
    </reaction>
</comment>
<comment type="cofactor">
    <cofactor evidence="1">
        <name>[4Fe-4S] cluster</name>
        <dbReference type="ChEBI" id="CHEBI:49883"/>
    </cofactor>
    <text evidence="1">Binds 1 [4Fe-4S] cluster per subunit.</text>
</comment>
<comment type="pathway">
    <text evidence="1">Isoprenoid biosynthesis; dimethylallyl diphosphate biosynthesis; dimethylallyl diphosphate from (2E)-4-hydroxy-3-methylbutenyl diphosphate: step 1/1.</text>
</comment>
<comment type="pathway">
    <text evidence="1">Isoprenoid biosynthesis; isopentenyl diphosphate biosynthesis via DXP pathway; isopentenyl diphosphate from 1-deoxy-D-xylulose 5-phosphate: step 6/6.</text>
</comment>
<comment type="subunit">
    <text evidence="1">Homodimer.</text>
</comment>
<comment type="similarity">
    <text evidence="1">Belongs to the IspH family.</text>
</comment>
<reference key="1">
    <citation type="journal article" date="2008" name="Genome Res.">
        <title>Comparative genome analysis of Salmonella enteritidis PT4 and Salmonella gallinarum 287/91 provides insights into evolutionary and host adaptation pathways.</title>
        <authorList>
            <person name="Thomson N.R."/>
            <person name="Clayton D.J."/>
            <person name="Windhorst D."/>
            <person name="Vernikos G."/>
            <person name="Davidson S."/>
            <person name="Churcher C."/>
            <person name="Quail M.A."/>
            <person name="Stevens M."/>
            <person name="Jones M.A."/>
            <person name="Watson M."/>
            <person name="Barron A."/>
            <person name="Layton A."/>
            <person name="Pickard D."/>
            <person name="Kingsley R.A."/>
            <person name="Bignell A."/>
            <person name="Clark L."/>
            <person name="Harris B."/>
            <person name="Ormond D."/>
            <person name="Abdellah Z."/>
            <person name="Brooks K."/>
            <person name="Cherevach I."/>
            <person name="Chillingworth T."/>
            <person name="Woodward J."/>
            <person name="Norberczak H."/>
            <person name="Lord A."/>
            <person name="Arrowsmith C."/>
            <person name="Jagels K."/>
            <person name="Moule S."/>
            <person name="Mungall K."/>
            <person name="Saunders M."/>
            <person name="Whitehead S."/>
            <person name="Chabalgoity J.A."/>
            <person name="Maskell D."/>
            <person name="Humphreys T."/>
            <person name="Roberts M."/>
            <person name="Barrow P.A."/>
            <person name="Dougan G."/>
            <person name="Parkhill J."/>
        </authorList>
    </citation>
    <scope>NUCLEOTIDE SEQUENCE [LARGE SCALE GENOMIC DNA]</scope>
    <source>
        <strain>287/91 / NCTC 13346</strain>
    </source>
</reference>
<gene>
    <name evidence="1" type="primary">ispH</name>
    <name type="ordered locus">SG0052</name>
</gene>
<protein>
    <recommendedName>
        <fullName evidence="1">4-hydroxy-3-methylbut-2-enyl diphosphate reductase</fullName>
        <shortName evidence="1">HMBPP reductase</shortName>
        <ecNumber evidence="1">1.17.7.4</ecNumber>
    </recommendedName>
</protein>
<proteinExistence type="inferred from homology"/>
<organism>
    <name type="scientific">Salmonella gallinarum (strain 287/91 / NCTC 13346)</name>
    <dbReference type="NCBI Taxonomy" id="550538"/>
    <lineage>
        <taxon>Bacteria</taxon>
        <taxon>Pseudomonadati</taxon>
        <taxon>Pseudomonadota</taxon>
        <taxon>Gammaproteobacteria</taxon>
        <taxon>Enterobacterales</taxon>
        <taxon>Enterobacteriaceae</taxon>
        <taxon>Salmonella</taxon>
    </lineage>
</organism>
<keyword id="KW-0004">4Fe-4S</keyword>
<keyword id="KW-0408">Iron</keyword>
<keyword id="KW-0411">Iron-sulfur</keyword>
<keyword id="KW-0414">Isoprene biosynthesis</keyword>
<keyword id="KW-0479">Metal-binding</keyword>
<keyword id="KW-0560">Oxidoreductase</keyword>